<accession>P56563</accession>
<accession>Q0VEF3</accession>
<accession>Q3TNV8</accession>
<accession>Q99PA6</accession>
<comment type="function">
    <text>Present in the thicker 16-17 nm junctions of mammalian lens fiber cells, where it may contribute to cell junctional organization. Acts as a receptor for calmodulin. May play an important role in both lens development and cataractogenesis.</text>
</comment>
<comment type="subunit">
    <text evidence="1">Seems to be associated with itself or another lens membrane component via disulfide bonds.</text>
</comment>
<comment type="subcellular location">
    <subcellularLocation>
        <location>Membrane</location>
        <topology>Multi-pass membrane protein</topology>
    </subcellularLocation>
</comment>
<comment type="disease">
    <text evidence="4">Defects in Lim2 are the cause of the cataractous mouse mutant with total opacity of lens 3 (To3). Mice heterozygous or homozygous for the To3 mutation have total opacity of the lens with a dense cataract. In addition, the To3/To3 homozygotes exhibit microphthalmia, abnormally small eyes.</text>
</comment>
<comment type="similarity">
    <text evidence="5">Belongs to the PMP-22/EMP/MP20 family.</text>
</comment>
<name>LMIP_MOUSE</name>
<protein>
    <recommendedName>
        <fullName>Lens fiber membrane intrinsic protein</fullName>
    </recommendedName>
    <alternativeName>
        <fullName>MP17</fullName>
    </alternativeName>
    <alternativeName>
        <fullName>MP18</fullName>
    </alternativeName>
    <alternativeName>
        <fullName>MP19</fullName>
    </alternativeName>
    <alternativeName>
        <fullName>MP20</fullName>
    </alternativeName>
</protein>
<sequence>MYSFMGGGLFCAWVGTILLVVATATDHWMQYRLSGSFAHQGLWRYCLGNKCFLQTESIAYWNATRAFMILSALCATSGIIMGVLAFAQQSTFTRLSRPFSAGIMFFASTLFVLLALAIYTGVTVSFLGRRFGDWRFSWSYILGWVALLMTFFAGIFYMCAYRMHECRRLATPR</sequence>
<organism>
    <name type="scientific">Mus musculus</name>
    <name type="common">Mouse</name>
    <dbReference type="NCBI Taxonomy" id="10090"/>
    <lineage>
        <taxon>Eukaryota</taxon>
        <taxon>Metazoa</taxon>
        <taxon>Chordata</taxon>
        <taxon>Craniata</taxon>
        <taxon>Vertebrata</taxon>
        <taxon>Euteleostomi</taxon>
        <taxon>Mammalia</taxon>
        <taxon>Eutheria</taxon>
        <taxon>Euarchontoglires</taxon>
        <taxon>Glires</taxon>
        <taxon>Rodentia</taxon>
        <taxon>Myomorpha</taxon>
        <taxon>Muroidea</taxon>
        <taxon>Muridae</taxon>
        <taxon>Murinae</taxon>
        <taxon>Mus</taxon>
        <taxon>Mus</taxon>
    </lineage>
</organism>
<keyword id="KW-0225">Disease variant</keyword>
<keyword id="KW-1015">Disulfide bond</keyword>
<keyword id="KW-0273">Eye lens protein</keyword>
<keyword id="KW-0325">Glycoprotein</keyword>
<keyword id="KW-0472">Membrane</keyword>
<keyword id="KW-0597">Phosphoprotein</keyword>
<keyword id="KW-1185">Reference proteome</keyword>
<keyword id="KW-0812">Transmembrane</keyword>
<keyword id="KW-1133">Transmembrane helix</keyword>
<evidence type="ECO:0000250" key="1"/>
<evidence type="ECO:0000250" key="2">
    <source>
        <dbReference type="UniProtKB" id="P20274"/>
    </source>
</evidence>
<evidence type="ECO:0000255" key="3"/>
<evidence type="ECO:0000269" key="4">
    <source>
    </source>
</evidence>
<evidence type="ECO:0000305" key="5"/>
<gene>
    <name type="primary">Lim2</name>
</gene>
<feature type="chain" id="PRO_0000164665" description="Lens fiber membrane intrinsic protein">
    <location>
        <begin position="1"/>
        <end position="173"/>
    </location>
</feature>
<feature type="topological domain" description="Cytoplasmic" evidence="3">
    <location>
        <begin position="1"/>
        <end position="3"/>
    </location>
</feature>
<feature type="transmembrane region" description="Helical" evidence="3">
    <location>
        <begin position="4"/>
        <end position="24"/>
    </location>
</feature>
<feature type="topological domain" description="Extracellular" evidence="3">
    <location>
        <begin position="25"/>
        <end position="66"/>
    </location>
</feature>
<feature type="transmembrane region" description="Helical" evidence="3">
    <location>
        <begin position="67"/>
        <end position="87"/>
    </location>
</feature>
<feature type="topological domain" description="Cytoplasmic" evidence="3">
    <location>
        <begin position="88"/>
        <end position="98"/>
    </location>
</feature>
<feature type="transmembrane region" description="Helical" evidence="3">
    <location>
        <begin position="99"/>
        <end position="119"/>
    </location>
</feature>
<feature type="topological domain" description="Extracellular" evidence="3">
    <location>
        <begin position="120"/>
        <end position="140"/>
    </location>
</feature>
<feature type="transmembrane region" description="Helical" evidence="3">
    <location>
        <begin position="141"/>
        <end position="161"/>
    </location>
</feature>
<feature type="topological domain" description="Cytoplasmic" evidence="3">
    <location>
        <begin position="162"/>
        <end position="173"/>
    </location>
</feature>
<feature type="modified residue" description="Phosphothreonine" evidence="2">
    <location>
        <position position="171"/>
    </location>
</feature>
<feature type="glycosylation site" description="C-linked (Man) tryptophan" evidence="2">
    <location>
        <position position="43"/>
    </location>
</feature>
<feature type="glycosylation site" description="C-linked (Man) tryptophan" evidence="2">
    <location>
        <position position="61"/>
    </location>
</feature>
<feature type="glycosylation site" description="N-linked (GlcNAc...) asparagine" evidence="3">
    <location>
        <position position="62"/>
    </location>
</feature>
<feature type="sequence variant" description="In To3." evidence="4">
    <original>G</original>
    <variation>V</variation>
    <location>
        <position position="15"/>
    </location>
</feature>
<proteinExistence type="evidence at protein level"/>
<dbReference type="EMBL" id="AF320075">
    <property type="protein sequence ID" value="AAK08062.1"/>
    <property type="molecule type" value="Genomic_DNA"/>
</dbReference>
<dbReference type="EMBL" id="AK029354">
    <property type="protein sequence ID" value="BAC26414.1"/>
    <property type="molecule type" value="mRNA"/>
</dbReference>
<dbReference type="EMBL" id="AK164958">
    <property type="protein sequence ID" value="BAE37979.1"/>
    <property type="molecule type" value="mRNA"/>
</dbReference>
<dbReference type="EMBL" id="BC119253">
    <property type="protein sequence ID" value="AAI19254.1"/>
    <property type="molecule type" value="mRNA"/>
</dbReference>
<dbReference type="EMBL" id="BC119255">
    <property type="protein sequence ID" value="AAI19256.1"/>
    <property type="molecule type" value="mRNA"/>
</dbReference>
<dbReference type="CCDS" id="CCDS21168.1"/>
<dbReference type="RefSeq" id="NP_808361.1">
    <property type="nucleotide sequence ID" value="NM_177693.4"/>
</dbReference>
<dbReference type="SMR" id="P56563"/>
<dbReference type="FunCoup" id="P56563">
    <property type="interactions" value="32"/>
</dbReference>
<dbReference type="STRING" id="10090.ENSMUSP00000004732"/>
<dbReference type="GlyCosmos" id="P56563">
    <property type="glycosylation" value="3 sites, No reported glycans"/>
</dbReference>
<dbReference type="GlyGen" id="P56563">
    <property type="glycosylation" value="3 sites"/>
</dbReference>
<dbReference type="PhosphoSitePlus" id="P56563"/>
<dbReference type="PaxDb" id="10090-ENSMUSP00000004732"/>
<dbReference type="ProteomicsDB" id="290132"/>
<dbReference type="Antibodypedia" id="46114">
    <property type="antibodies" value="132 antibodies from 22 providers"/>
</dbReference>
<dbReference type="DNASU" id="233187"/>
<dbReference type="Ensembl" id="ENSMUST00000004732.7">
    <property type="protein sequence ID" value="ENSMUSP00000004732.6"/>
    <property type="gene ID" value="ENSMUSG00000118560.2"/>
</dbReference>
<dbReference type="GeneID" id="233187"/>
<dbReference type="KEGG" id="mmu:233187"/>
<dbReference type="UCSC" id="uc009gmp.1">
    <property type="organism name" value="mouse"/>
</dbReference>
<dbReference type="AGR" id="MGI:104698"/>
<dbReference type="CTD" id="3982"/>
<dbReference type="MGI" id="MGI:104698">
    <property type="gene designation" value="Lim2"/>
</dbReference>
<dbReference type="VEuPathDB" id="HostDB:ENSMUSG00000118560"/>
<dbReference type="eggNOG" id="ENOG502QSWZ">
    <property type="taxonomic scope" value="Eukaryota"/>
</dbReference>
<dbReference type="GeneTree" id="ENSGT01050000244814"/>
<dbReference type="HOGENOM" id="CLU_113769_0_0_1"/>
<dbReference type="InParanoid" id="P56563"/>
<dbReference type="OMA" id="KCYMQTE"/>
<dbReference type="OrthoDB" id="6137544at2759"/>
<dbReference type="PhylomeDB" id="P56563"/>
<dbReference type="TreeFam" id="TF330587"/>
<dbReference type="BioGRID-ORCS" id="233187">
    <property type="hits" value="2 hits in 79 CRISPR screens"/>
</dbReference>
<dbReference type="ChiTaRS" id="Lhx2">
    <property type="organism name" value="mouse"/>
</dbReference>
<dbReference type="PRO" id="PR:P56563"/>
<dbReference type="Proteomes" id="UP000000589">
    <property type="component" value="Chromosome 7"/>
</dbReference>
<dbReference type="RNAct" id="P56563">
    <property type="molecule type" value="protein"/>
</dbReference>
<dbReference type="Bgee" id="ENSMUSG00000118560">
    <property type="expression patterns" value="Expressed in lens of camera-type eye and 9 other cell types or tissues"/>
</dbReference>
<dbReference type="GO" id="GO:0005923">
    <property type="term" value="C:bicellular tight junction"/>
    <property type="evidence" value="ECO:0000304"/>
    <property type="project" value="MGI"/>
</dbReference>
<dbReference type="GO" id="GO:0016020">
    <property type="term" value="C:membrane"/>
    <property type="evidence" value="ECO:0007669"/>
    <property type="project" value="UniProtKB-SubCell"/>
</dbReference>
<dbReference type="GO" id="GO:0031982">
    <property type="term" value="C:vesicle"/>
    <property type="evidence" value="ECO:0007669"/>
    <property type="project" value="Ensembl"/>
</dbReference>
<dbReference type="GO" id="GO:0005212">
    <property type="term" value="F:structural constituent of eye lens"/>
    <property type="evidence" value="ECO:0000304"/>
    <property type="project" value="MGI"/>
</dbReference>
<dbReference type="GO" id="GO:0043010">
    <property type="term" value="P:camera-type eye development"/>
    <property type="evidence" value="ECO:0000315"/>
    <property type="project" value="MGI"/>
</dbReference>
<dbReference type="GO" id="GO:0002088">
    <property type="term" value="P:lens development in camera-type eye"/>
    <property type="evidence" value="ECO:0000315"/>
    <property type="project" value="MGI"/>
</dbReference>
<dbReference type="FunFam" id="1.20.140.150:FF:000013">
    <property type="entry name" value="lens fiber membrane intrinsic protein-like"/>
    <property type="match status" value="1"/>
</dbReference>
<dbReference type="Gene3D" id="1.20.140.150">
    <property type="match status" value="1"/>
</dbReference>
<dbReference type="InterPro" id="IPR003935">
    <property type="entry name" value="LMIP"/>
</dbReference>
<dbReference type="InterPro" id="IPR050579">
    <property type="entry name" value="PMP-22/EMP/MP20-like"/>
</dbReference>
<dbReference type="InterPro" id="IPR004031">
    <property type="entry name" value="PMP22/EMP/MP20/Claudin"/>
</dbReference>
<dbReference type="InterPro" id="IPR004032">
    <property type="entry name" value="PMP22_EMP_MP20"/>
</dbReference>
<dbReference type="PANTHER" id="PTHR10671">
    <property type="entry name" value="EPITHELIAL MEMBRANE PROTEIN-RELATED"/>
    <property type="match status" value="1"/>
</dbReference>
<dbReference type="PANTHER" id="PTHR10671:SF9">
    <property type="entry name" value="LENS FIBER MEMBRANE INTRINSIC PROTEIN"/>
    <property type="match status" value="1"/>
</dbReference>
<dbReference type="Pfam" id="PF00822">
    <property type="entry name" value="PMP22_Claudin"/>
    <property type="match status" value="1"/>
</dbReference>
<dbReference type="PRINTS" id="PR01453">
    <property type="entry name" value="EPMEMFAMILY"/>
</dbReference>
<dbReference type="PRINTS" id="PR01457">
    <property type="entry name" value="LENSMEMPROT"/>
</dbReference>
<dbReference type="PROSITE" id="PS01221">
    <property type="entry name" value="PMP22_1"/>
    <property type="match status" value="1"/>
</dbReference>
<dbReference type="PROSITE" id="PS01222">
    <property type="entry name" value="PMP22_2"/>
    <property type="match status" value="1"/>
</dbReference>
<reference key="1">
    <citation type="journal article" date="2001" name="Mol. Vis.">
        <title>The mouse lens fiber-cell intrinsic membrane protein MP19 gene (Lim2) and granule membrane protein GMP-17 gene (Nkg7): isolation and sequence analysis of two neighboring genes.</title>
        <authorList>
            <person name="Zhou L."/>
            <person name="Li X.L."/>
            <person name="Church R.L."/>
        </authorList>
    </citation>
    <scope>NUCLEOTIDE SEQUENCE [GENOMIC DNA]</scope>
    <source>
        <strain>129/SvJ</strain>
    </source>
</reference>
<reference key="2">
    <citation type="journal article" date="2005" name="Science">
        <title>The transcriptional landscape of the mammalian genome.</title>
        <authorList>
            <person name="Carninci P."/>
            <person name="Kasukawa T."/>
            <person name="Katayama S."/>
            <person name="Gough J."/>
            <person name="Frith M.C."/>
            <person name="Maeda N."/>
            <person name="Oyama R."/>
            <person name="Ravasi T."/>
            <person name="Lenhard B."/>
            <person name="Wells C."/>
            <person name="Kodzius R."/>
            <person name="Shimokawa K."/>
            <person name="Bajic V.B."/>
            <person name="Brenner S.E."/>
            <person name="Batalov S."/>
            <person name="Forrest A.R."/>
            <person name="Zavolan M."/>
            <person name="Davis M.J."/>
            <person name="Wilming L.G."/>
            <person name="Aidinis V."/>
            <person name="Allen J.E."/>
            <person name="Ambesi-Impiombato A."/>
            <person name="Apweiler R."/>
            <person name="Aturaliya R.N."/>
            <person name="Bailey T.L."/>
            <person name="Bansal M."/>
            <person name="Baxter L."/>
            <person name="Beisel K.W."/>
            <person name="Bersano T."/>
            <person name="Bono H."/>
            <person name="Chalk A.M."/>
            <person name="Chiu K.P."/>
            <person name="Choudhary V."/>
            <person name="Christoffels A."/>
            <person name="Clutterbuck D.R."/>
            <person name="Crowe M.L."/>
            <person name="Dalla E."/>
            <person name="Dalrymple B.P."/>
            <person name="de Bono B."/>
            <person name="Della Gatta G."/>
            <person name="di Bernardo D."/>
            <person name="Down T."/>
            <person name="Engstrom P."/>
            <person name="Fagiolini M."/>
            <person name="Faulkner G."/>
            <person name="Fletcher C.F."/>
            <person name="Fukushima T."/>
            <person name="Furuno M."/>
            <person name="Futaki S."/>
            <person name="Gariboldi M."/>
            <person name="Georgii-Hemming P."/>
            <person name="Gingeras T.R."/>
            <person name="Gojobori T."/>
            <person name="Green R.E."/>
            <person name="Gustincich S."/>
            <person name="Harbers M."/>
            <person name="Hayashi Y."/>
            <person name="Hensch T.K."/>
            <person name="Hirokawa N."/>
            <person name="Hill D."/>
            <person name="Huminiecki L."/>
            <person name="Iacono M."/>
            <person name="Ikeo K."/>
            <person name="Iwama A."/>
            <person name="Ishikawa T."/>
            <person name="Jakt M."/>
            <person name="Kanapin A."/>
            <person name="Katoh M."/>
            <person name="Kawasawa Y."/>
            <person name="Kelso J."/>
            <person name="Kitamura H."/>
            <person name="Kitano H."/>
            <person name="Kollias G."/>
            <person name="Krishnan S.P."/>
            <person name="Kruger A."/>
            <person name="Kummerfeld S.K."/>
            <person name="Kurochkin I.V."/>
            <person name="Lareau L.F."/>
            <person name="Lazarevic D."/>
            <person name="Lipovich L."/>
            <person name="Liu J."/>
            <person name="Liuni S."/>
            <person name="McWilliam S."/>
            <person name="Madan Babu M."/>
            <person name="Madera M."/>
            <person name="Marchionni L."/>
            <person name="Matsuda H."/>
            <person name="Matsuzawa S."/>
            <person name="Miki H."/>
            <person name="Mignone F."/>
            <person name="Miyake S."/>
            <person name="Morris K."/>
            <person name="Mottagui-Tabar S."/>
            <person name="Mulder N."/>
            <person name="Nakano N."/>
            <person name="Nakauchi H."/>
            <person name="Ng P."/>
            <person name="Nilsson R."/>
            <person name="Nishiguchi S."/>
            <person name="Nishikawa S."/>
            <person name="Nori F."/>
            <person name="Ohara O."/>
            <person name="Okazaki Y."/>
            <person name="Orlando V."/>
            <person name="Pang K.C."/>
            <person name="Pavan W.J."/>
            <person name="Pavesi G."/>
            <person name="Pesole G."/>
            <person name="Petrovsky N."/>
            <person name="Piazza S."/>
            <person name="Reed J."/>
            <person name="Reid J.F."/>
            <person name="Ring B.Z."/>
            <person name="Ringwald M."/>
            <person name="Rost B."/>
            <person name="Ruan Y."/>
            <person name="Salzberg S.L."/>
            <person name="Sandelin A."/>
            <person name="Schneider C."/>
            <person name="Schoenbach C."/>
            <person name="Sekiguchi K."/>
            <person name="Semple C.A."/>
            <person name="Seno S."/>
            <person name="Sessa L."/>
            <person name="Sheng Y."/>
            <person name="Shibata Y."/>
            <person name="Shimada H."/>
            <person name="Shimada K."/>
            <person name="Silva D."/>
            <person name="Sinclair B."/>
            <person name="Sperling S."/>
            <person name="Stupka E."/>
            <person name="Sugiura K."/>
            <person name="Sultana R."/>
            <person name="Takenaka Y."/>
            <person name="Taki K."/>
            <person name="Tammoja K."/>
            <person name="Tan S.L."/>
            <person name="Tang S."/>
            <person name="Taylor M.S."/>
            <person name="Tegner J."/>
            <person name="Teichmann S.A."/>
            <person name="Ueda H.R."/>
            <person name="van Nimwegen E."/>
            <person name="Verardo R."/>
            <person name="Wei C.L."/>
            <person name="Yagi K."/>
            <person name="Yamanishi H."/>
            <person name="Zabarovsky E."/>
            <person name="Zhu S."/>
            <person name="Zimmer A."/>
            <person name="Hide W."/>
            <person name="Bult C."/>
            <person name="Grimmond S.M."/>
            <person name="Teasdale R.D."/>
            <person name="Liu E.T."/>
            <person name="Brusic V."/>
            <person name="Quackenbush J."/>
            <person name="Wahlestedt C."/>
            <person name="Mattick J.S."/>
            <person name="Hume D.A."/>
            <person name="Kai C."/>
            <person name="Sasaki D."/>
            <person name="Tomaru Y."/>
            <person name="Fukuda S."/>
            <person name="Kanamori-Katayama M."/>
            <person name="Suzuki M."/>
            <person name="Aoki J."/>
            <person name="Arakawa T."/>
            <person name="Iida J."/>
            <person name="Imamura K."/>
            <person name="Itoh M."/>
            <person name="Kato T."/>
            <person name="Kawaji H."/>
            <person name="Kawagashira N."/>
            <person name="Kawashima T."/>
            <person name="Kojima M."/>
            <person name="Kondo S."/>
            <person name="Konno H."/>
            <person name="Nakano K."/>
            <person name="Ninomiya N."/>
            <person name="Nishio T."/>
            <person name="Okada M."/>
            <person name="Plessy C."/>
            <person name="Shibata K."/>
            <person name="Shiraki T."/>
            <person name="Suzuki S."/>
            <person name="Tagami M."/>
            <person name="Waki K."/>
            <person name="Watahiki A."/>
            <person name="Okamura-Oho Y."/>
            <person name="Suzuki H."/>
            <person name="Kawai J."/>
            <person name="Hayashizaki Y."/>
        </authorList>
    </citation>
    <scope>NUCLEOTIDE SEQUENCE [LARGE SCALE MRNA]</scope>
    <source>
        <strain>C57BL/6J</strain>
        <tissue>Eye</tissue>
        <tissue>Head</tissue>
    </source>
</reference>
<reference key="3">
    <citation type="journal article" date="2004" name="Genome Res.">
        <title>The status, quality, and expansion of the NIH full-length cDNA project: the Mammalian Gene Collection (MGC).</title>
        <authorList>
            <consortium name="The MGC Project Team"/>
        </authorList>
    </citation>
    <scope>NUCLEOTIDE SEQUENCE [LARGE SCALE MRNA]</scope>
    <source>
        <tissue>Brain</tissue>
    </source>
</reference>
<reference key="4">
    <citation type="journal article" date="1997" name="Mol. Vis.">
        <title>Identification of a mutation in the MP19 gene, Lim2, in the cataractous mouse mutant To3.</title>
        <authorList>
            <person name="Steele E.C. Jr."/>
            <person name="Kerscher S."/>
            <person name="Lyon M.F."/>
            <person name="Glenister P.H."/>
            <person name="Favor J."/>
            <person name="Wang J."/>
            <person name="Church R.L."/>
        </authorList>
    </citation>
    <scope>VARIANT TO3 VAL-15</scope>
    <scope>DISEASE</scope>
</reference>